<evidence type="ECO:0000255" key="1">
    <source>
        <dbReference type="HAMAP-Rule" id="MF_00244"/>
    </source>
</evidence>
<feature type="chain" id="PRO_0000310110" description="Probable nicotinate-nucleotide adenylyltransferase">
    <location>
        <begin position="1"/>
        <end position="202"/>
    </location>
</feature>
<comment type="function">
    <text evidence="1">Catalyzes the reversible adenylation of nicotinate mononucleotide (NaMN) to nicotinic acid adenine dinucleotide (NaAD).</text>
</comment>
<comment type="catalytic activity">
    <reaction evidence="1">
        <text>nicotinate beta-D-ribonucleotide + ATP + H(+) = deamido-NAD(+) + diphosphate</text>
        <dbReference type="Rhea" id="RHEA:22860"/>
        <dbReference type="ChEBI" id="CHEBI:15378"/>
        <dbReference type="ChEBI" id="CHEBI:30616"/>
        <dbReference type="ChEBI" id="CHEBI:33019"/>
        <dbReference type="ChEBI" id="CHEBI:57502"/>
        <dbReference type="ChEBI" id="CHEBI:58437"/>
        <dbReference type="EC" id="2.7.7.18"/>
    </reaction>
</comment>
<comment type="pathway">
    <text evidence="1">Cofactor biosynthesis; NAD(+) biosynthesis; deamido-NAD(+) from nicotinate D-ribonucleotide: step 1/1.</text>
</comment>
<comment type="similarity">
    <text evidence="1">Belongs to the NadD family.</text>
</comment>
<accession>Q0SR56</accession>
<proteinExistence type="inferred from homology"/>
<name>NADD_CLOPS</name>
<reference key="1">
    <citation type="journal article" date="2006" name="Genome Res.">
        <title>Skewed genomic variability in strains of the toxigenic bacterial pathogen, Clostridium perfringens.</title>
        <authorList>
            <person name="Myers G.S.A."/>
            <person name="Rasko D.A."/>
            <person name="Cheung J.K."/>
            <person name="Ravel J."/>
            <person name="Seshadri R."/>
            <person name="DeBoy R.T."/>
            <person name="Ren Q."/>
            <person name="Varga J."/>
            <person name="Awad M.M."/>
            <person name="Brinkac L.M."/>
            <person name="Daugherty S.C."/>
            <person name="Haft D.H."/>
            <person name="Dodson R.J."/>
            <person name="Madupu R."/>
            <person name="Nelson W.C."/>
            <person name="Rosovitz M.J."/>
            <person name="Sullivan S.A."/>
            <person name="Khouri H."/>
            <person name="Dimitrov G.I."/>
            <person name="Watkins K.L."/>
            <person name="Mulligan S."/>
            <person name="Benton J."/>
            <person name="Radune D."/>
            <person name="Fisher D.J."/>
            <person name="Atkins H.S."/>
            <person name="Hiscox T."/>
            <person name="Jost B.H."/>
            <person name="Billington S.J."/>
            <person name="Songer J.G."/>
            <person name="McClane B.A."/>
            <person name="Titball R.W."/>
            <person name="Rood J.I."/>
            <person name="Melville S.B."/>
            <person name="Paulsen I.T."/>
        </authorList>
    </citation>
    <scope>NUCLEOTIDE SEQUENCE [LARGE SCALE GENOMIC DNA]</scope>
    <source>
        <strain>SM101 / Type A</strain>
    </source>
</reference>
<organism>
    <name type="scientific">Clostridium perfringens (strain SM101 / Type A)</name>
    <dbReference type="NCBI Taxonomy" id="289380"/>
    <lineage>
        <taxon>Bacteria</taxon>
        <taxon>Bacillati</taxon>
        <taxon>Bacillota</taxon>
        <taxon>Clostridia</taxon>
        <taxon>Eubacteriales</taxon>
        <taxon>Clostridiaceae</taxon>
        <taxon>Clostridium</taxon>
    </lineage>
</organism>
<protein>
    <recommendedName>
        <fullName evidence="1">Probable nicotinate-nucleotide adenylyltransferase</fullName>
        <ecNumber evidence="1">2.7.7.18</ecNumber>
    </recommendedName>
    <alternativeName>
        <fullName evidence="1">Deamido-NAD(+) diphosphorylase</fullName>
    </alternativeName>
    <alternativeName>
        <fullName evidence="1">Deamido-NAD(+) pyrophosphorylase</fullName>
    </alternativeName>
    <alternativeName>
        <fullName evidence="1">Nicotinate mononucleotide adenylyltransferase</fullName>
        <shortName evidence="1">NaMN adenylyltransferase</shortName>
    </alternativeName>
</protein>
<dbReference type="EC" id="2.7.7.18" evidence="1"/>
<dbReference type="EMBL" id="CP000312">
    <property type="protein sequence ID" value="ABG86938.1"/>
    <property type="molecule type" value="Genomic_DNA"/>
</dbReference>
<dbReference type="RefSeq" id="WP_011592936.1">
    <property type="nucleotide sequence ID" value="NC_008262.1"/>
</dbReference>
<dbReference type="SMR" id="Q0SR56"/>
<dbReference type="KEGG" id="cpr:CPR_2092"/>
<dbReference type="UniPathway" id="UPA00253">
    <property type="reaction ID" value="UER00332"/>
</dbReference>
<dbReference type="Proteomes" id="UP000001824">
    <property type="component" value="Chromosome"/>
</dbReference>
<dbReference type="GO" id="GO:0005524">
    <property type="term" value="F:ATP binding"/>
    <property type="evidence" value="ECO:0007669"/>
    <property type="project" value="UniProtKB-KW"/>
</dbReference>
<dbReference type="GO" id="GO:0004515">
    <property type="term" value="F:nicotinate-nucleotide adenylyltransferase activity"/>
    <property type="evidence" value="ECO:0007669"/>
    <property type="project" value="UniProtKB-UniRule"/>
</dbReference>
<dbReference type="GO" id="GO:0009435">
    <property type="term" value="P:NAD biosynthetic process"/>
    <property type="evidence" value="ECO:0007669"/>
    <property type="project" value="UniProtKB-UniRule"/>
</dbReference>
<dbReference type="CDD" id="cd02165">
    <property type="entry name" value="NMNAT"/>
    <property type="match status" value="1"/>
</dbReference>
<dbReference type="Gene3D" id="3.40.50.620">
    <property type="entry name" value="HUPs"/>
    <property type="match status" value="1"/>
</dbReference>
<dbReference type="HAMAP" id="MF_00244">
    <property type="entry name" value="NaMN_adenylyltr"/>
    <property type="match status" value="1"/>
</dbReference>
<dbReference type="InterPro" id="IPR004821">
    <property type="entry name" value="Cyt_trans-like"/>
</dbReference>
<dbReference type="InterPro" id="IPR005248">
    <property type="entry name" value="NadD/NMNAT"/>
</dbReference>
<dbReference type="InterPro" id="IPR014729">
    <property type="entry name" value="Rossmann-like_a/b/a_fold"/>
</dbReference>
<dbReference type="NCBIfam" id="TIGR00125">
    <property type="entry name" value="cyt_tran_rel"/>
    <property type="match status" value="1"/>
</dbReference>
<dbReference type="NCBIfam" id="TIGR00482">
    <property type="entry name" value="nicotinate (nicotinamide) nucleotide adenylyltransferase"/>
    <property type="match status" value="1"/>
</dbReference>
<dbReference type="NCBIfam" id="NF000840">
    <property type="entry name" value="PRK00071.1-3"/>
    <property type="match status" value="1"/>
</dbReference>
<dbReference type="PANTHER" id="PTHR39321">
    <property type="entry name" value="NICOTINATE-NUCLEOTIDE ADENYLYLTRANSFERASE-RELATED"/>
    <property type="match status" value="1"/>
</dbReference>
<dbReference type="PANTHER" id="PTHR39321:SF3">
    <property type="entry name" value="PHOSPHOPANTETHEINE ADENYLYLTRANSFERASE"/>
    <property type="match status" value="1"/>
</dbReference>
<dbReference type="Pfam" id="PF01467">
    <property type="entry name" value="CTP_transf_like"/>
    <property type="match status" value="1"/>
</dbReference>
<dbReference type="SUPFAM" id="SSF52374">
    <property type="entry name" value="Nucleotidylyl transferase"/>
    <property type="match status" value="1"/>
</dbReference>
<sequence length="202" mass="24049">MKKIGVFGGTFDPIHIGHIYIAYEAYKILELDEVIFMPAGNPPHKKWKDITDEIIRYEMVKKAIEPYSFFSINNYEIEKKGLSFTYETLRYLHESFKEVELYFITGADCLVNLNSWKNINEIFKFSNLVVFNRPGFDKNNLLKRKEEFDREYCTNIVYLDLLNIEISSTLIRERVRQSLEVKFFLPPGVVDIIDKYNLYRRE</sequence>
<gene>
    <name evidence="1" type="primary">nadD</name>
    <name type="ordered locus">CPR_2092</name>
</gene>
<keyword id="KW-0067">ATP-binding</keyword>
<keyword id="KW-0520">NAD</keyword>
<keyword id="KW-0547">Nucleotide-binding</keyword>
<keyword id="KW-0548">Nucleotidyltransferase</keyword>
<keyword id="KW-0662">Pyridine nucleotide biosynthesis</keyword>
<keyword id="KW-0808">Transferase</keyword>